<protein>
    <recommendedName>
        <fullName evidence="1">5'-nucleotidase SurE</fullName>
        <ecNumber evidence="1">3.1.3.5</ecNumber>
    </recommendedName>
    <alternativeName>
        <fullName evidence="1">Nucleoside 5'-monophosphate phosphohydrolase</fullName>
    </alternativeName>
</protein>
<organism>
    <name type="scientific">Burkholderia mallei (strain ATCC 23344)</name>
    <dbReference type="NCBI Taxonomy" id="243160"/>
    <lineage>
        <taxon>Bacteria</taxon>
        <taxon>Pseudomonadati</taxon>
        <taxon>Pseudomonadota</taxon>
        <taxon>Betaproteobacteria</taxon>
        <taxon>Burkholderiales</taxon>
        <taxon>Burkholderiaceae</taxon>
        <taxon>Burkholderia</taxon>
        <taxon>pseudomallei group</taxon>
    </lineage>
</organism>
<accession>Q62JV2</accession>
<feature type="chain" id="PRO_0000235597" description="5'-nucleotidase SurE">
    <location>
        <begin position="1"/>
        <end position="253"/>
    </location>
</feature>
<feature type="binding site" evidence="1">
    <location>
        <position position="8"/>
    </location>
    <ligand>
        <name>a divalent metal cation</name>
        <dbReference type="ChEBI" id="CHEBI:60240"/>
    </ligand>
</feature>
<feature type="binding site" evidence="1">
    <location>
        <position position="9"/>
    </location>
    <ligand>
        <name>a divalent metal cation</name>
        <dbReference type="ChEBI" id="CHEBI:60240"/>
    </ligand>
</feature>
<feature type="binding site" evidence="1">
    <location>
        <position position="39"/>
    </location>
    <ligand>
        <name>a divalent metal cation</name>
        <dbReference type="ChEBI" id="CHEBI:60240"/>
    </ligand>
</feature>
<feature type="binding site" evidence="1">
    <location>
        <position position="92"/>
    </location>
    <ligand>
        <name>a divalent metal cation</name>
        <dbReference type="ChEBI" id="CHEBI:60240"/>
    </ligand>
</feature>
<comment type="function">
    <text evidence="1">Nucleotidase that shows phosphatase activity on nucleoside 5'-monophosphates.</text>
</comment>
<comment type="catalytic activity">
    <reaction evidence="1">
        <text>a ribonucleoside 5'-phosphate + H2O = a ribonucleoside + phosphate</text>
        <dbReference type="Rhea" id="RHEA:12484"/>
        <dbReference type="ChEBI" id="CHEBI:15377"/>
        <dbReference type="ChEBI" id="CHEBI:18254"/>
        <dbReference type="ChEBI" id="CHEBI:43474"/>
        <dbReference type="ChEBI" id="CHEBI:58043"/>
        <dbReference type="EC" id="3.1.3.5"/>
    </reaction>
</comment>
<comment type="cofactor">
    <cofactor evidence="1">
        <name>a divalent metal cation</name>
        <dbReference type="ChEBI" id="CHEBI:60240"/>
    </cofactor>
    <text evidence="1">Binds 1 divalent metal cation per subunit.</text>
</comment>
<comment type="subcellular location">
    <subcellularLocation>
        <location evidence="1">Cytoplasm</location>
    </subcellularLocation>
</comment>
<comment type="similarity">
    <text evidence="1">Belongs to the SurE nucleotidase family.</text>
</comment>
<keyword id="KW-0963">Cytoplasm</keyword>
<keyword id="KW-0378">Hydrolase</keyword>
<keyword id="KW-0479">Metal-binding</keyword>
<keyword id="KW-0547">Nucleotide-binding</keyword>
<keyword id="KW-1185">Reference proteome</keyword>
<sequence>MRILLSNDDGYLAPGLAALYEALRPLAEILVMAPEQNCSGASNSLTLSRPLSVSRSAATGFYYVNGTPTDSVHVALTGMLDTKPDLVVSGINNGQNMGDDTLYSGTVAAATEGIMFGVPAIAFSLVHKEWAHLGDAARVAAEIVRHYLDHPLPGQPLLNVNIPNLPYEELKGWRVTRLGKRHPSQPVIRQTNPRGEPIYWIGAAGDALDASEGTDFHATASGYVSITPLQLDLTHTQMLGATRDWARAGSGAS</sequence>
<gene>
    <name evidence="1" type="primary">surE</name>
    <name type="ordered locus">BMA1357</name>
</gene>
<reference key="1">
    <citation type="journal article" date="2004" name="Proc. Natl. Acad. Sci. U.S.A.">
        <title>Structural flexibility in the Burkholderia mallei genome.</title>
        <authorList>
            <person name="Nierman W.C."/>
            <person name="DeShazer D."/>
            <person name="Kim H.S."/>
            <person name="Tettelin H."/>
            <person name="Nelson K.E."/>
            <person name="Feldblyum T.V."/>
            <person name="Ulrich R.L."/>
            <person name="Ronning C.M."/>
            <person name="Brinkac L.M."/>
            <person name="Daugherty S.C."/>
            <person name="Davidsen T.D."/>
            <person name="DeBoy R.T."/>
            <person name="Dimitrov G."/>
            <person name="Dodson R.J."/>
            <person name="Durkin A.S."/>
            <person name="Gwinn M.L."/>
            <person name="Haft D.H."/>
            <person name="Khouri H.M."/>
            <person name="Kolonay J.F."/>
            <person name="Madupu R."/>
            <person name="Mohammoud Y."/>
            <person name="Nelson W.C."/>
            <person name="Radune D."/>
            <person name="Romero C.M."/>
            <person name="Sarria S."/>
            <person name="Selengut J."/>
            <person name="Shamblin C."/>
            <person name="Sullivan S.A."/>
            <person name="White O."/>
            <person name="Yu Y."/>
            <person name="Zafar N."/>
            <person name="Zhou L."/>
            <person name="Fraser C.M."/>
        </authorList>
    </citation>
    <scope>NUCLEOTIDE SEQUENCE [LARGE SCALE GENOMIC DNA]</scope>
    <source>
        <strain>ATCC 23344</strain>
    </source>
</reference>
<proteinExistence type="inferred from homology"/>
<dbReference type="EC" id="3.1.3.5" evidence="1"/>
<dbReference type="EMBL" id="CP000010">
    <property type="protein sequence ID" value="AAU47586.1"/>
    <property type="molecule type" value="Genomic_DNA"/>
</dbReference>
<dbReference type="RefSeq" id="WP_004198595.1">
    <property type="nucleotide sequence ID" value="NC_006348.1"/>
</dbReference>
<dbReference type="RefSeq" id="YP_103017.1">
    <property type="nucleotide sequence ID" value="NC_006348.1"/>
</dbReference>
<dbReference type="SMR" id="Q62JV2"/>
<dbReference type="GeneID" id="92979090"/>
<dbReference type="KEGG" id="bma:BMA1357"/>
<dbReference type="PATRIC" id="fig|243160.12.peg.1396"/>
<dbReference type="eggNOG" id="COG0496">
    <property type="taxonomic scope" value="Bacteria"/>
</dbReference>
<dbReference type="HOGENOM" id="CLU_045192_1_2_4"/>
<dbReference type="Proteomes" id="UP000006693">
    <property type="component" value="Chromosome 1"/>
</dbReference>
<dbReference type="GO" id="GO:0005737">
    <property type="term" value="C:cytoplasm"/>
    <property type="evidence" value="ECO:0007669"/>
    <property type="project" value="UniProtKB-SubCell"/>
</dbReference>
<dbReference type="GO" id="GO:0008254">
    <property type="term" value="F:3'-nucleotidase activity"/>
    <property type="evidence" value="ECO:0007669"/>
    <property type="project" value="TreeGrafter"/>
</dbReference>
<dbReference type="GO" id="GO:0008253">
    <property type="term" value="F:5'-nucleotidase activity"/>
    <property type="evidence" value="ECO:0007669"/>
    <property type="project" value="UniProtKB-UniRule"/>
</dbReference>
<dbReference type="GO" id="GO:0004309">
    <property type="term" value="F:exopolyphosphatase activity"/>
    <property type="evidence" value="ECO:0007669"/>
    <property type="project" value="TreeGrafter"/>
</dbReference>
<dbReference type="GO" id="GO:0046872">
    <property type="term" value="F:metal ion binding"/>
    <property type="evidence" value="ECO:0007669"/>
    <property type="project" value="UniProtKB-UniRule"/>
</dbReference>
<dbReference type="GO" id="GO:0000166">
    <property type="term" value="F:nucleotide binding"/>
    <property type="evidence" value="ECO:0007669"/>
    <property type="project" value="UniProtKB-KW"/>
</dbReference>
<dbReference type="FunFam" id="3.40.1210.10:FF:000001">
    <property type="entry name" value="5'/3'-nucleotidase SurE"/>
    <property type="match status" value="1"/>
</dbReference>
<dbReference type="Gene3D" id="3.40.1210.10">
    <property type="entry name" value="Survival protein SurE-like phosphatase/nucleotidase"/>
    <property type="match status" value="1"/>
</dbReference>
<dbReference type="HAMAP" id="MF_00060">
    <property type="entry name" value="SurE"/>
    <property type="match status" value="1"/>
</dbReference>
<dbReference type="InterPro" id="IPR030048">
    <property type="entry name" value="SurE"/>
</dbReference>
<dbReference type="InterPro" id="IPR002828">
    <property type="entry name" value="SurE-like_Pase/nucleotidase"/>
</dbReference>
<dbReference type="InterPro" id="IPR036523">
    <property type="entry name" value="SurE-like_sf"/>
</dbReference>
<dbReference type="NCBIfam" id="NF001489">
    <property type="entry name" value="PRK00346.1-3"/>
    <property type="match status" value="1"/>
</dbReference>
<dbReference type="NCBIfam" id="NF001490">
    <property type="entry name" value="PRK00346.1-4"/>
    <property type="match status" value="1"/>
</dbReference>
<dbReference type="NCBIfam" id="TIGR00087">
    <property type="entry name" value="surE"/>
    <property type="match status" value="1"/>
</dbReference>
<dbReference type="PANTHER" id="PTHR30457">
    <property type="entry name" value="5'-NUCLEOTIDASE SURE"/>
    <property type="match status" value="1"/>
</dbReference>
<dbReference type="PANTHER" id="PTHR30457:SF12">
    <property type="entry name" value="5'_3'-NUCLEOTIDASE SURE"/>
    <property type="match status" value="1"/>
</dbReference>
<dbReference type="Pfam" id="PF01975">
    <property type="entry name" value="SurE"/>
    <property type="match status" value="1"/>
</dbReference>
<dbReference type="SUPFAM" id="SSF64167">
    <property type="entry name" value="SurE-like"/>
    <property type="match status" value="1"/>
</dbReference>
<name>SURE_BURMA</name>
<evidence type="ECO:0000255" key="1">
    <source>
        <dbReference type="HAMAP-Rule" id="MF_00060"/>
    </source>
</evidence>